<proteinExistence type="inferred from homology"/>
<sequence length="425" mass="46501">MTKALDGVRILDFTHVQSGPTCTQLLAWFGADVIKVERPGVGDITRGQLQDLPNVDSLYFTMLNHNKRSITLDTKNPKGKEVLTELIKTCDVLVENFGPGVLDRMGFPWEKIQSINPKMIVASIKGFGPGPYEDCKVYENVAQCTGGAASTTGFRDGPPLVTGAQIGDSGTGLHLALGIVTALYQRTTTGRGQRVTAAMQDGVLNLTRVKLRDQQRLAHGPLKEFSQFGEGIPFGEAVPRAGNDSGGGQPGRILKCKGWQTDPNAYIYFITQAPVWEKICDVINEPDWKTHAEYAKPAARLKHLNSIFARIEEWTMTKTKFEAMDILNEYDIPCGPILSMKELAEDPSLRATGTVVEVEHPTRGKYLSVGNPIKLSDSPTDVQRSPLLGEHTDEILRQVLGFSDHQVAEIHDSGALDPPRKAAAE</sequence>
<keyword id="KW-0808">Transferase</keyword>
<organism>
    <name type="scientific">Rhodopseudomonas palustris (strain BisA53)</name>
    <dbReference type="NCBI Taxonomy" id="316055"/>
    <lineage>
        <taxon>Bacteria</taxon>
        <taxon>Pseudomonadati</taxon>
        <taxon>Pseudomonadota</taxon>
        <taxon>Alphaproteobacteria</taxon>
        <taxon>Hyphomicrobiales</taxon>
        <taxon>Nitrobacteraceae</taxon>
        <taxon>Rhodopseudomonas</taxon>
    </lineage>
</organism>
<comment type="function">
    <text evidence="1">Involved in the catabolism of oxalate and in the adapatation to low pH via the induction of the oxalate-dependent acid tolerance response (ATR). Catalyzes the transfer of the CoA moiety from formyl-CoA to oxalate (By similarity).</text>
</comment>
<comment type="catalytic activity">
    <reaction evidence="2">
        <text>formyl-CoA + oxalate = oxalyl-CoA + formate</text>
        <dbReference type="Rhea" id="RHEA:16545"/>
        <dbReference type="ChEBI" id="CHEBI:15740"/>
        <dbReference type="ChEBI" id="CHEBI:30623"/>
        <dbReference type="ChEBI" id="CHEBI:57376"/>
        <dbReference type="ChEBI" id="CHEBI:57388"/>
        <dbReference type="EC" id="2.8.3.16"/>
    </reaction>
</comment>
<comment type="pathway">
    <text evidence="2">Metabolic intermediate degradation; oxalate degradation; CO(2) and formate from oxalate: step 1/2.</text>
</comment>
<comment type="subunit">
    <text evidence="2">Homodimer.</text>
</comment>
<comment type="similarity">
    <text evidence="2">Belongs to the CoA-transferase III family. Frc subfamily.</text>
</comment>
<protein>
    <recommendedName>
        <fullName>Formyl-CoA:oxalate CoA-transferase</fullName>
        <shortName>FCOCT</shortName>
        <ecNumber evidence="2">2.8.3.16</ecNumber>
    </recommendedName>
    <alternativeName>
        <fullName evidence="2">Formyl-coenzyme A transferase</fullName>
        <shortName evidence="2">Formyl-CoA transferase</shortName>
    </alternativeName>
</protein>
<evidence type="ECO:0000250" key="1"/>
<evidence type="ECO:0000255" key="2">
    <source>
        <dbReference type="HAMAP-Rule" id="MF_00742"/>
    </source>
</evidence>
<reference key="1">
    <citation type="submission" date="2006-09" db="EMBL/GenBank/DDBJ databases">
        <title>Complete sequence of Rhodopseudomonas palustris BisA53.</title>
        <authorList>
            <consortium name="US DOE Joint Genome Institute"/>
            <person name="Copeland A."/>
            <person name="Lucas S."/>
            <person name="Lapidus A."/>
            <person name="Barry K."/>
            <person name="Detter J.C."/>
            <person name="Glavina del Rio T."/>
            <person name="Hammon N."/>
            <person name="Israni S."/>
            <person name="Dalin E."/>
            <person name="Tice H."/>
            <person name="Pitluck S."/>
            <person name="Chain P."/>
            <person name="Malfatti S."/>
            <person name="Shin M."/>
            <person name="Vergez L."/>
            <person name="Schmutz J."/>
            <person name="Larimer F."/>
            <person name="Land M."/>
            <person name="Hauser L."/>
            <person name="Pelletier D.A."/>
            <person name="Kyrpides N."/>
            <person name="Kim E."/>
            <person name="Harwood C.S."/>
            <person name="Oda Y."/>
            <person name="Richardson P."/>
        </authorList>
    </citation>
    <scope>NUCLEOTIDE SEQUENCE [LARGE SCALE GENOMIC DNA]</scope>
    <source>
        <strain>BisA53</strain>
    </source>
</reference>
<accession>Q07Q82</accession>
<dbReference type="EC" id="2.8.3.16" evidence="2"/>
<dbReference type="EMBL" id="CP000463">
    <property type="protein sequence ID" value="ABJ05902.1"/>
    <property type="molecule type" value="Genomic_DNA"/>
</dbReference>
<dbReference type="SMR" id="Q07Q82"/>
<dbReference type="STRING" id="316055.RPE_1958"/>
<dbReference type="KEGG" id="rpe:RPE_1958"/>
<dbReference type="eggNOG" id="COG1804">
    <property type="taxonomic scope" value="Bacteria"/>
</dbReference>
<dbReference type="HOGENOM" id="CLU_033975_2_1_5"/>
<dbReference type="OrthoDB" id="9806585at2"/>
<dbReference type="UniPathway" id="UPA00540">
    <property type="reaction ID" value="UER00598"/>
</dbReference>
<dbReference type="GO" id="GO:0033608">
    <property type="term" value="F:formyl-CoA transferase activity"/>
    <property type="evidence" value="ECO:0007669"/>
    <property type="project" value="UniProtKB-EC"/>
</dbReference>
<dbReference type="GO" id="GO:0033611">
    <property type="term" value="P:oxalate catabolic process"/>
    <property type="evidence" value="ECO:0007669"/>
    <property type="project" value="UniProtKB-UniRule"/>
</dbReference>
<dbReference type="Gene3D" id="3.40.50.10540">
    <property type="entry name" value="Crotonobetainyl-coa:carnitine coa-transferase, domain 1"/>
    <property type="match status" value="1"/>
</dbReference>
<dbReference type="Gene3D" id="3.30.1540.10">
    <property type="entry name" value="formyl-coa transferase, domain 3"/>
    <property type="match status" value="1"/>
</dbReference>
<dbReference type="HAMAP" id="MF_00742">
    <property type="entry name" value="Formyl_CoA_transfer"/>
    <property type="match status" value="1"/>
</dbReference>
<dbReference type="InterPro" id="IPR050483">
    <property type="entry name" value="CoA-transferase_III_domain"/>
</dbReference>
<dbReference type="InterPro" id="IPR003673">
    <property type="entry name" value="CoA-Trfase_fam_III"/>
</dbReference>
<dbReference type="InterPro" id="IPR044855">
    <property type="entry name" value="CoA-Trfase_III_dom3_sf"/>
</dbReference>
<dbReference type="InterPro" id="IPR023606">
    <property type="entry name" value="CoA-Trfase_III_dom_1_sf"/>
</dbReference>
<dbReference type="InterPro" id="IPR017659">
    <property type="entry name" value="Formyl_CoA_transfer"/>
</dbReference>
<dbReference type="NCBIfam" id="TIGR03253">
    <property type="entry name" value="oxalate_frc"/>
    <property type="match status" value="1"/>
</dbReference>
<dbReference type="NCBIfam" id="NF003809">
    <property type="entry name" value="PRK05398.1"/>
    <property type="match status" value="1"/>
</dbReference>
<dbReference type="PANTHER" id="PTHR48207">
    <property type="entry name" value="SUCCINATE--HYDROXYMETHYLGLUTARATE COA-TRANSFERASE"/>
    <property type="match status" value="1"/>
</dbReference>
<dbReference type="PANTHER" id="PTHR48207:SF3">
    <property type="entry name" value="SUCCINATE--HYDROXYMETHYLGLUTARATE COA-TRANSFERASE"/>
    <property type="match status" value="1"/>
</dbReference>
<dbReference type="Pfam" id="PF02515">
    <property type="entry name" value="CoA_transf_3"/>
    <property type="match status" value="1"/>
</dbReference>
<dbReference type="SUPFAM" id="SSF89796">
    <property type="entry name" value="CoA-transferase family III (CaiB/BaiF)"/>
    <property type="match status" value="1"/>
</dbReference>
<gene>
    <name evidence="2" type="primary">frc</name>
    <name type="ordered locus">RPE_1958</name>
</gene>
<feature type="chain" id="PRO_0000300990" description="Formyl-CoA:oxalate CoA-transferase">
    <location>
        <begin position="1"/>
        <end position="425"/>
    </location>
</feature>
<feature type="active site" description="Nucleophile" evidence="2">
    <location>
        <position position="168"/>
    </location>
</feature>
<feature type="binding site" evidence="1">
    <location>
        <begin position="17"/>
        <end position="18"/>
    </location>
    <ligand>
        <name>CoA</name>
        <dbReference type="ChEBI" id="CHEBI:57287"/>
    </ligand>
</feature>
<feature type="binding site" evidence="2">
    <location>
        <position position="38"/>
    </location>
    <ligand>
        <name>CoA</name>
        <dbReference type="ChEBI" id="CHEBI:57287"/>
    </ligand>
</feature>
<feature type="binding site" evidence="1">
    <location>
        <begin position="72"/>
        <end position="75"/>
    </location>
    <ligand>
        <name>CoA</name>
        <dbReference type="ChEBI" id="CHEBI:57287"/>
    </ligand>
</feature>
<feature type="binding site" evidence="1">
    <location>
        <begin position="96"/>
        <end position="98"/>
    </location>
    <ligand>
        <name>CoA</name>
        <dbReference type="ChEBI" id="CHEBI:57287"/>
    </ligand>
</feature>
<feature type="binding site" evidence="2">
    <location>
        <position position="104"/>
    </location>
    <ligand>
        <name>CoA</name>
        <dbReference type="ChEBI" id="CHEBI:57287"/>
    </ligand>
</feature>
<feature type="binding site" evidence="1">
    <location>
        <begin position="136"/>
        <end position="139"/>
    </location>
    <ligand>
        <name>CoA</name>
        <dbReference type="ChEBI" id="CHEBI:57287"/>
    </ligand>
</feature>
<feature type="binding site" evidence="1">
    <location>
        <begin position="247"/>
        <end position="249"/>
    </location>
    <ligand>
        <name>substrate</name>
    </ligand>
</feature>
<name>FCTA_RHOP5</name>